<organism>
    <name type="scientific">Xanthomonas oryzae pv. oryzae (strain MAFF 311018)</name>
    <dbReference type="NCBI Taxonomy" id="342109"/>
    <lineage>
        <taxon>Bacteria</taxon>
        <taxon>Pseudomonadati</taxon>
        <taxon>Pseudomonadota</taxon>
        <taxon>Gammaproteobacteria</taxon>
        <taxon>Lysobacterales</taxon>
        <taxon>Lysobacteraceae</taxon>
        <taxon>Xanthomonas</taxon>
    </lineage>
</organism>
<keyword id="KW-0963">Cytoplasm</keyword>
<keyword id="KW-0342">GTP-binding</keyword>
<keyword id="KW-0378">Hydrolase</keyword>
<keyword id="KW-0479">Metal-binding</keyword>
<keyword id="KW-0547">Nucleotide-binding</keyword>
<keyword id="KW-0690">Ribosome biogenesis</keyword>
<keyword id="KW-0694">RNA-binding</keyword>
<keyword id="KW-0699">rRNA-binding</keyword>
<keyword id="KW-0862">Zinc</keyword>
<proteinExistence type="inferred from homology"/>
<gene>
    <name evidence="1" type="primary">rsgA</name>
    <name type="ordered locus">XOO0993</name>
</gene>
<sequence length="363" mass="39073">MSDISPDYPTLQSIGWPWPGPPEEAAWKAVFAAHPQALPARVVEQHRTGYVVADTPEASLKAESLPEWQRPRFPSHERAAVGDWVLMEGKRIVALLPRRTSIKRGAAGAHYHQQVIAANIDTVFIVCGLDADFNPRRIERYLLLVGGGGAQPVVVLTKADQTEHAEDALAVLEELEAQNIPLRAVNAKDPASVAALRPWLGDGRTAVLVGSSGAGKSTLTNTLLGTEKMKTNGVRENDSRGRHTTTHRALIPLPSGACLIDTPGMRELKPTGEEDLAEGGFSDVEALAAQCRFNDCAHIAEPGCAVRAAIEADLLDPERVANYMKLRVEVASAAEKLATRVAQNNRGKGSGKRPASIDRPGRR</sequence>
<reference key="1">
    <citation type="journal article" date="2005" name="Jpn. Agric. Res. Q.">
        <title>Genome sequence of Xanthomonas oryzae pv. oryzae suggests contribution of large numbers of effector genes and insertion sequences to its race diversity.</title>
        <authorList>
            <person name="Ochiai H."/>
            <person name="Inoue Y."/>
            <person name="Takeya M."/>
            <person name="Sasaki A."/>
            <person name="Kaku H."/>
        </authorList>
    </citation>
    <scope>NUCLEOTIDE SEQUENCE [LARGE SCALE GENOMIC DNA]</scope>
    <source>
        <strain>MAFF 311018</strain>
    </source>
</reference>
<protein>
    <recommendedName>
        <fullName evidence="1">Small ribosomal subunit biogenesis GTPase RsgA</fullName>
        <ecNumber evidence="1">3.6.1.-</ecNumber>
    </recommendedName>
</protein>
<accession>Q2P6S9</accession>
<feature type="chain" id="PRO_1000188153" description="Small ribosomal subunit biogenesis GTPase RsgA">
    <location>
        <begin position="1"/>
        <end position="363"/>
    </location>
</feature>
<feature type="domain" description="CP-type G" evidence="2">
    <location>
        <begin position="112"/>
        <end position="268"/>
    </location>
</feature>
<feature type="region of interest" description="Disordered" evidence="3">
    <location>
        <begin position="340"/>
        <end position="363"/>
    </location>
</feature>
<feature type="binding site" evidence="1">
    <location>
        <begin position="157"/>
        <end position="160"/>
    </location>
    <ligand>
        <name>GTP</name>
        <dbReference type="ChEBI" id="CHEBI:37565"/>
    </ligand>
</feature>
<feature type="binding site" evidence="1">
    <location>
        <begin position="210"/>
        <end position="218"/>
    </location>
    <ligand>
        <name>GTP</name>
        <dbReference type="ChEBI" id="CHEBI:37565"/>
    </ligand>
</feature>
<feature type="binding site" evidence="1">
    <location>
        <position position="291"/>
    </location>
    <ligand>
        <name>Zn(2+)</name>
        <dbReference type="ChEBI" id="CHEBI:29105"/>
    </ligand>
</feature>
<feature type="binding site" evidence="1">
    <location>
        <position position="296"/>
    </location>
    <ligand>
        <name>Zn(2+)</name>
        <dbReference type="ChEBI" id="CHEBI:29105"/>
    </ligand>
</feature>
<feature type="binding site" evidence="1">
    <location>
        <position position="298"/>
    </location>
    <ligand>
        <name>Zn(2+)</name>
        <dbReference type="ChEBI" id="CHEBI:29105"/>
    </ligand>
</feature>
<feature type="binding site" evidence="1">
    <location>
        <position position="304"/>
    </location>
    <ligand>
        <name>Zn(2+)</name>
        <dbReference type="ChEBI" id="CHEBI:29105"/>
    </ligand>
</feature>
<comment type="function">
    <text evidence="1">One of several proteins that assist in the late maturation steps of the functional core of the 30S ribosomal subunit. Helps release RbfA from mature subunits. May play a role in the assembly of ribosomal proteins into the subunit. Circularly permuted GTPase that catalyzes slow GTP hydrolysis, GTPase activity is stimulated by the 30S ribosomal subunit.</text>
</comment>
<comment type="cofactor">
    <cofactor evidence="1">
        <name>Zn(2+)</name>
        <dbReference type="ChEBI" id="CHEBI:29105"/>
    </cofactor>
    <text evidence="1">Binds 1 zinc ion per subunit.</text>
</comment>
<comment type="subunit">
    <text evidence="1">Monomer. Associates with 30S ribosomal subunit, binds 16S rRNA.</text>
</comment>
<comment type="subcellular location">
    <subcellularLocation>
        <location evidence="1">Cytoplasm</location>
    </subcellularLocation>
</comment>
<comment type="similarity">
    <text evidence="1">Belongs to the TRAFAC class YlqF/YawG GTPase family. RsgA subfamily.</text>
</comment>
<evidence type="ECO:0000255" key="1">
    <source>
        <dbReference type="HAMAP-Rule" id="MF_01820"/>
    </source>
</evidence>
<evidence type="ECO:0000255" key="2">
    <source>
        <dbReference type="PROSITE-ProRule" id="PRU01058"/>
    </source>
</evidence>
<evidence type="ECO:0000256" key="3">
    <source>
        <dbReference type="SAM" id="MobiDB-lite"/>
    </source>
</evidence>
<name>RSGA_XANOM</name>
<dbReference type="EC" id="3.6.1.-" evidence="1"/>
<dbReference type="EMBL" id="AP008229">
    <property type="protein sequence ID" value="BAE67748.1"/>
    <property type="molecule type" value="Genomic_DNA"/>
</dbReference>
<dbReference type="RefSeq" id="WP_011257937.1">
    <property type="nucleotide sequence ID" value="NC_007705.1"/>
</dbReference>
<dbReference type="SMR" id="Q2P6S9"/>
<dbReference type="KEGG" id="xom:XOO0993"/>
<dbReference type="HOGENOM" id="CLU_033617_0_1_6"/>
<dbReference type="GO" id="GO:0005737">
    <property type="term" value="C:cytoplasm"/>
    <property type="evidence" value="ECO:0007669"/>
    <property type="project" value="UniProtKB-SubCell"/>
</dbReference>
<dbReference type="GO" id="GO:0005525">
    <property type="term" value="F:GTP binding"/>
    <property type="evidence" value="ECO:0007669"/>
    <property type="project" value="UniProtKB-UniRule"/>
</dbReference>
<dbReference type="GO" id="GO:0003924">
    <property type="term" value="F:GTPase activity"/>
    <property type="evidence" value="ECO:0007669"/>
    <property type="project" value="UniProtKB-UniRule"/>
</dbReference>
<dbReference type="GO" id="GO:0046872">
    <property type="term" value="F:metal ion binding"/>
    <property type="evidence" value="ECO:0007669"/>
    <property type="project" value="UniProtKB-KW"/>
</dbReference>
<dbReference type="GO" id="GO:0019843">
    <property type="term" value="F:rRNA binding"/>
    <property type="evidence" value="ECO:0007669"/>
    <property type="project" value="UniProtKB-KW"/>
</dbReference>
<dbReference type="GO" id="GO:0042274">
    <property type="term" value="P:ribosomal small subunit biogenesis"/>
    <property type="evidence" value="ECO:0007669"/>
    <property type="project" value="UniProtKB-UniRule"/>
</dbReference>
<dbReference type="CDD" id="cd01854">
    <property type="entry name" value="YjeQ_EngC"/>
    <property type="match status" value="1"/>
</dbReference>
<dbReference type="Gene3D" id="3.40.50.300">
    <property type="entry name" value="P-loop containing nucleotide triphosphate hydrolases"/>
    <property type="match status" value="1"/>
</dbReference>
<dbReference type="Gene3D" id="1.10.40.50">
    <property type="entry name" value="Probable gtpase engc, domain 3"/>
    <property type="match status" value="1"/>
</dbReference>
<dbReference type="HAMAP" id="MF_01820">
    <property type="entry name" value="GTPase_RsgA"/>
    <property type="match status" value="1"/>
</dbReference>
<dbReference type="InterPro" id="IPR030378">
    <property type="entry name" value="G_CP_dom"/>
</dbReference>
<dbReference type="InterPro" id="IPR027417">
    <property type="entry name" value="P-loop_NTPase"/>
</dbReference>
<dbReference type="InterPro" id="IPR004881">
    <property type="entry name" value="Ribosome_biogen_GTPase_RsgA"/>
</dbReference>
<dbReference type="InterPro" id="IPR010914">
    <property type="entry name" value="RsgA_GTPase_dom"/>
</dbReference>
<dbReference type="NCBIfam" id="TIGR00157">
    <property type="entry name" value="ribosome small subunit-dependent GTPase A"/>
    <property type="match status" value="1"/>
</dbReference>
<dbReference type="PANTHER" id="PTHR32120">
    <property type="entry name" value="SMALL RIBOSOMAL SUBUNIT BIOGENESIS GTPASE RSGA"/>
    <property type="match status" value="1"/>
</dbReference>
<dbReference type="PANTHER" id="PTHR32120:SF10">
    <property type="entry name" value="SMALL RIBOSOMAL SUBUNIT BIOGENESIS GTPASE RSGA"/>
    <property type="match status" value="1"/>
</dbReference>
<dbReference type="Pfam" id="PF03193">
    <property type="entry name" value="RsgA_GTPase"/>
    <property type="match status" value="1"/>
</dbReference>
<dbReference type="SUPFAM" id="SSF52540">
    <property type="entry name" value="P-loop containing nucleoside triphosphate hydrolases"/>
    <property type="match status" value="1"/>
</dbReference>
<dbReference type="PROSITE" id="PS50936">
    <property type="entry name" value="ENGC_GTPASE"/>
    <property type="match status" value="1"/>
</dbReference>
<dbReference type="PROSITE" id="PS51721">
    <property type="entry name" value="G_CP"/>
    <property type="match status" value="1"/>
</dbReference>